<comment type="catalytic activity">
    <reaction>
        <text>uridine + ATP = UMP + ADP + H(+)</text>
        <dbReference type="Rhea" id="RHEA:16825"/>
        <dbReference type="ChEBI" id="CHEBI:15378"/>
        <dbReference type="ChEBI" id="CHEBI:16704"/>
        <dbReference type="ChEBI" id="CHEBI:30616"/>
        <dbReference type="ChEBI" id="CHEBI:57865"/>
        <dbReference type="ChEBI" id="CHEBI:456216"/>
        <dbReference type="EC" id="2.7.1.48"/>
    </reaction>
</comment>
<comment type="catalytic activity">
    <reaction>
        <text>cytidine + ATP = CMP + ADP + H(+)</text>
        <dbReference type="Rhea" id="RHEA:24674"/>
        <dbReference type="ChEBI" id="CHEBI:15378"/>
        <dbReference type="ChEBI" id="CHEBI:17562"/>
        <dbReference type="ChEBI" id="CHEBI:30616"/>
        <dbReference type="ChEBI" id="CHEBI:60377"/>
        <dbReference type="ChEBI" id="CHEBI:456216"/>
        <dbReference type="EC" id="2.7.1.48"/>
    </reaction>
</comment>
<comment type="pathway">
    <text>Pyrimidine metabolism; CTP biosynthesis via salvage pathway; CTP from cytidine: step 1/3.</text>
</comment>
<comment type="pathway">
    <text>Pyrimidine metabolism; UMP biosynthesis via salvage pathway; UMP from uridine: step 1/1.</text>
</comment>
<comment type="subcellular location">
    <subcellularLocation>
        <location evidence="2">Cytoplasm</location>
    </subcellularLocation>
    <subcellularLocation>
        <location evidence="2">Nucleus</location>
    </subcellularLocation>
</comment>
<comment type="similarity">
    <text evidence="3">Belongs to the uridine kinase family.</text>
</comment>
<name>YIDE_SCHPO</name>
<evidence type="ECO:0000255" key="1"/>
<evidence type="ECO:0000269" key="2">
    <source>
    </source>
</evidence>
<evidence type="ECO:0000305" key="3"/>
<dbReference type="EC" id="2.7.1.48"/>
<dbReference type="EMBL" id="CU329670">
    <property type="protein sequence ID" value="CAB61463.1"/>
    <property type="molecule type" value="Genomic_DNA"/>
</dbReference>
<dbReference type="PIR" id="T50170">
    <property type="entry name" value="T50170"/>
</dbReference>
<dbReference type="RefSeq" id="NP_592968.1">
    <property type="nucleotide sequence ID" value="NM_001018368.2"/>
</dbReference>
<dbReference type="SMR" id="Q9UTC5"/>
<dbReference type="BioGRID" id="277985">
    <property type="interactions" value="13"/>
</dbReference>
<dbReference type="FunCoup" id="Q9UTC5">
    <property type="interactions" value="341"/>
</dbReference>
<dbReference type="STRING" id="284812.Q9UTC5"/>
<dbReference type="iPTMnet" id="Q9UTC5"/>
<dbReference type="PaxDb" id="4896-SPAC227.14.1"/>
<dbReference type="EnsemblFungi" id="SPAC227.14.1">
    <property type="protein sequence ID" value="SPAC227.14.1:pep"/>
    <property type="gene ID" value="SPAC227.14"/>
</dbReference>
<dbReference type="PomBase" id="SPAC227.14"/>
<dbReference type="VEuPathDB" id="FungiDB:SPAC227.14"/>
<dbReference type="eggNOG" id="KOG2702">
    <property type="taxonomic scope" value="Eukaryota"/>
</dbReference>
<dbReference type="HOGENOM" id="CLU_067202_0_1_1"/>
<dbReference type="InParanoid" id="Q9UTC5"/>
<dbReference type="OMA" id="VDQNDFL"/>
<dbReference type="PhylomeDB" id="Q9UTC5"/>
<dbReference type="UniPathway" id="UPA00574">
    <property type="reaction ID" value="UER00637"/>
</dbReference>
<dbReference type="UniPathway" id="UPA00579">
    <property type="reaction ID" value="UER00640"/>
</dbReference>
<dbReference type="PRO" id="PR:Q9UTC5"/>
<dbReference type="Proteomes" id="UP000002485">
    <property type="component" value="Chromosome I"/>
</dbReference>
<dbReference type="GO" id="GO:0005737">
    <property type="term" value="C:cytoplasm"/>
    <property type="evidence" value="ECO:0000318"/>
    <property type="project" value="GO_Central"/>
</dbReference>
<dbReference type="GO" id="GO:0005829">
    <property type="term" value="C:cytosol"/>
    <property type="evidence" value="ECO:0007005"/>
    <property type="project" value="PomBase"/>
</dbReference>
<dbReference type="GO" id="GO:0005634">
    <property type="term" value="C:nucleus"/>
    <property type="evidence" value="ECO:0007005"/>
    <property type="project" value="PomBase"/>
</dbReference>
<dbReference type="GO" id="GO:0005524">
    <property type="term" value="F:ATP binding"/>
    <property type="evidence" value="ECO:0007669"/>
    <property type="project" value="UniProtKB-KW"/>
</dbReference>
<dbReference type="GO" id="GO:0043771">
    <property type="term" value="F:cytidine kinase activity"/>
    <property type="evidence" value="ECO:0007669"/>
    <property type="project" value="RHEA"/>
</dbReference>
<dbReference type="GO" id="GO:0004849">
    <property type="term" value="F:uridine kinase activity"/>
    <property type="evidence" value="ECO:0007669"/>
    <property type="project" value="UniProtKB-EC"/>
</dbReference>
<dbReference type="GO" id="GO:0044211">
    <property type="term" value="P:CTP salvage"/>
    <property type="evidence" value="ECO:0007669"/>
    <property type="project" value="UniProtKB-UniPathway"/>
</dbReference>
<dbReference type="GO" id="GO:0044206">
    <property type="term" value="P:UMP salvage"/>
    <property type="evidence" value="ECO:0007669"/>
    <property type="project" value="UniProtKB-UniPathway"/>
</dbReference>
<dbReference type="Gene3D" id="3.40.50.300">
    <property type="entry name" value="P-loop containing nucleotide triphosphate hydrolases"/>
    <property type="match status" value="2"/>
</dbReference>
<dbReference type="InterPro" id="IPR027417">
    <property type="entry name" value="P-loop_NTPase"/>
</dbReference>
<dbReference type="InterPro" id="IPR006083">
    <property type="entry name" value="PRK/URK"/>
</dbReference>
<dbReference type="PANTHER" id="PTHR10285">
    <property type="entry name" value="URIDINE KINASE"/>
    <property type="match status" value="1"/>
</dbReference>
<dbReference type="Pfam" id="PF00485">
    <property type="entry name" value="PRK"/>
    <property type="match status" value="1"/>
</dbReference>
<dbReference type="PRINTS" id="PR00988">
    <property type="entry name" value="URIDINKINASE"/>
</dbReference>
<dbReference type="SUPFAM" id="SSF52540">
    <property type="entry name" value="P-loop containing nucleoside triphosphate hydrolases"/>
    <property type="match status" value="1"/>
</dbReference>
<organism>
    <name type="scientific">Schizosaccharomyces pombe (strain 972 / ATCC 24843)</name>
    <name type="common">Fission yeast</name>
    <dbReference type="NCBI Taxonomy" id="284812"/>
    <lineage>
        <taxon>Eukaryota</taxon>
        <taxon>Fungi</taxon>
        <taxon>Dikarya</taxon>
        <taxon>Ascomycota</taxon>
        <taxon>Taphrinomycotina</taxon>
        <taxon>Schizosaccharomycetes</taxon>
        <taxon>Schizosaccharomycetales</taxon>
        <taxon>Schizosaccharomycetaceae</taxon>
        <taxon>Schizosaccharomyces</taxon>
    </lineage>
</organism>
<accession>Q9UTC5</accession>
<keyword id="KW-0067">ATP-binding</keyword>
<keyword id="KW-0963">Cytoplasm</keyword>
<keyword id="KW-0418">Kinase</keyword>
<keyword id="KW-0547">Nucleotide-binding</keyword>
<keyword id="KW-0539">Nucleus</keyword>
<keyword id="KW-1185">Reference proteome</keyword>
<keyword id="KW-0808">Transferase</keyword>
<sequence length="235" mass="26620">MALQVDAPDVSSYDELYNRAVELLKHQQRVLIGLAGGPGSGKSTLCAILAKAWNERFGSEIVKIIPMDGFHYSLEELDRFDNPEKARALRGAEWTFDADLFYSLVRLMKKITDRELYAPSFDHAIGDPVVDDICVEPKNRILIFEGNYLLLNKPPWSDACKLYDIKAYLPVEHSVARARVAHRHLVSGLCATEEEAIERTDRNDMINLTFVEKNMVTPDIVLQQLRLKTVKTSSL</sequence>
<feature type="chain" id="PRO_0000358938" description="Putative uridine kinase C227.14">
    <location>
        <begin position="1"/>
        <end position="235"/>
    </location>
</feature>
<feature type="binding site" evidence="1">
    <location>
        <begin position="36"/>
        <end position="43"/>
    </location>
    <ligand>
        <name>ATP</name>
        <dbReference type="ChEBI" id="CHEBI:30616"/>
    </ligand>
</feature>
<gene>
    <name type="ORF">SPAC227.14</name>
</gene>
<proteinExistence type="inferred from homology"/>
<reference key="1">
    <citation type="journal article" date="2002" name="Nature">
        <title>The genome sequence of Schizosaccharomyces pombe.</title>
        <authorList>
            <person name="Wood V."/>
            <person name="Gwilliam R."/>
            <person name="Rajandream M.A."/>
            <person name="Lyne M.H."/>
            <person name="Lyne R."/>
            <person name="Stewart A."/>
            <person name="Sgouros J.G."/>
            <person name="Peat N."/>
            <person name="Hayles J."/>
            <person name="Baker S.G."/>
            <person name="Basham D."/>
            <person name="Bowman S."/>
            <person name="Brooks K."/>
            <person name="Brown D."/>
            <person name="Brown S."/>
            <person name="Chillingworth T."/>
            <person name="Churcher C.M."/>
            <person name="Collins M."/>
            <person name="Connor R."/>
            <person name="Cronin A."/>
            <person name="Davis P."/>
            <person name="Feltwell T."/>
            <person name="Fraser A."/>
            <person name="Gentles S."/>
            <person name="Goble A."/>
            <person name="Hamlin N."/>
            <person name="Harris D.E."/>
            <person name="Hidalgo J."/>
            <person name="Hodgson G."/>
            <person name="Holroyd S."/>
            <person name="Hornsby T."/>
            <person name="Howarth S."/>
            <person name="Huckle E.J."/>
            <person name="Hunt S."/>
            <person name="Jagels K."/>
            <person name="James K.D."/>
            <person name="Jones L."/>
            <person name="Jones M."/>
            <person name="Leather S."/>
            <person name="McDonald S."/>
            <person name="McLean J."/>
            <person name="Mooney P."/>
            <person name="Moule S."/>
            <person name="Mungall K.L."/>
            <person name="Murphy L.D."/>
            <person name="Niblett D."/>
            <person name="Odell C."/>
            <person name="Oliver K."/>
            <person name="O'Neil S."/>
            <person name="Pearson D."/>
            <person name="Quail M.A."/>
            <person name="Rabbinowitsch E."/>
            <person name="Rutherford K.M."/>
            <person name="Rutter S."/>
            <person name="Saunders D."/>
            <person name="Seeger K."/>
            <person name="Sharp S."/>
            <person name="Skelton J."/>
            <person name="Simmonds M.N."/>
            <person name="Squares R."/>
            <person name="Squares S."/>
            <person name="Stevens K."/>
            <person name="Taylor K."/>
            <person name="Taylor R.G."/>
            <person name="Tivey A."/>
            <person name="Walsh S.V."/>
            <person name="Warren T."/>
            <person name="Whitehead S."/>
            <person name="Woodward J.R."/>
            <person name="Volckaert G."/>
            <person name="Aert R."/>
            <person name="Robben J."/>
            <person name="Grymonprez B."/>
            <person name="Weltjens I."/>
            <person name="Vanstreels E."/>
            <person name="Rieger M."/>
            <person name="Schaefer M."/>
            <person name="Mueller-Auer S."/>
            <person name="Gabel C."/>
            <person name="Fuchs M."/>
            <person name="Duesterhoeft A."/>
            <person name="Fritzc C."/>
            <person name="Holzer E."/>
            <person name="Moestl D."/>
            <person name="Hilbert H."/>
            <person name="Borzym K."/>
            <person name="Langer I."/>
            <person name="Beck A."/>
            <person name="Lehrach H."/>
            <person name="Reinhardt R."/>
            <person name="Pohl T.M."/>
            <person name="Eger P."/>
            <person name="Zimmermann W."/>
            <person name="Wedler H."/>
            <person name="Wambutt R."/>
            <person name="Purnelle B."/>
            <person name="Goffeau A."/>
            <person name="Cadieu E."/>
            <person name="Dreano S."/>
            <person name="Gloux S."/>
            <person name="Lelaure V."/>
            <person name="Mottier S."/>
            <person name="Galibert F."/>
            <person name="Aves S.J."/>
            <person name="Xiang Z."/>
            <person name="Hunt C."/>
            <person name="Moore K."/>
            <person name="Hurst S.M."/>
            <person name="Lucas M."/>
            <person name="Rochet M."/>
            <person name="Gaillardin C."/>
            <person name="Tallada V.A."/>
            <person name="Garzon A."/>
            <person name="Thode G."/>
            <person name="Daga R.R."/>
            <person name="Cruzado L."/>
            <person name="Jimenez J."/>
            <person name="Sanchez M."/>
            <person name="del Rey F."/>
            <person name="Benito J."/>
            <person name="Dominguez A."/>
            <person name="Revuelta J.L."/>
            <person name="Moreno S."/>
            <person name="Armstrong J."/>
            <person name="Forsburg S.L."/>
            <person name="Cerutti L."/>
            <person name="Lowe T."/>
            <person name="McCombie W.R."/>
            <person name="Paulsen I."/>
            <person name="Potashkin J."/>
            <person name="Shpakovski G.V."/>
            <person name="Ussery D."/>
            <person name="Barrell B.G."/>
            <person name="Nurse P."/>
        </authorList>
    </citation>
    <scope>NUCLEOTIDE SEQUENCE [LARGE SCALE GENOMIC DNA]</scope>
    <source>
        <strain>972 / ATCC 24843</strain>
    </source>
</reference>
<reference key="2">
    <citation type="journal article" date="2006" name="Nat. Biotechnol.">
        <title>ORFeome cloning and global analysis of protein localization in the fission yeast Schizosaccharomyces pombe.</title>
        <authorList>
            <person name="Matsuyama A."/>
            <person name="Arai R."/>
            <person name="Yashiroda Y."/>
            <person name="Shirai A."/>
            <person name="Kamata A."/>
            <person name="Sekido S."/>
            <person name="Kobayashi Y."/>
            <person name="Hashimoto A."/>
            <person name="Hamamoto M."/>
            <person name="Hiraoka Y."/>
            <person name="Horinouchi S."/>
            <person name="Yoshida M."/>
        </authorList>
    </citation>
    <scope>SUBCELLULAR LOCATION [LARGE SCALE ANALYSIS]</scope>
</reference>
<protein>
    <recommendedName>
        <fullName>Putative uridine kinase C227.14</fullName>
        <ecNumber>2.7.1.48</ecNumber>
    </recommendedName>
</protein>